<dbReference type="EC" id="2.7.7.18" evidence="1"/>
<dbReference type="EMBL" id="CP000241">
    <property type="protein sequence ID" value="ABF85351.1"/>
    <property type="molecule type" value="Genomic_DNA"/>
</dbReference>
<dbReference type="SMR" id="Q1CRS1"/>
<dbReference type="KEGG" id="hpa:HPAG1_1284"/>
<dbReference type="HOGENOM" id="CLU_069765_3_2_7"/>
<dbReference type="UniPathway" id="UPA00253">
    <property type="reaction ID" value="UER00332"/>
</dbReference>
<dbReference type="GO" id="GO:0005524">
    <property type="term" value="F:ATP binding"/>
    <property type="evidence" value="ECO:0007669"/>
    <property type="project" value="UniProtKB-KW"/>
</dbReference>
<dbReference type="GO" id="GO:0004515">
    <property type="term" value="F:nicotinate-nucleotide adenylyltransferase activity"/>
    <property type="evidence" value="ECO:0007669"/>
    <property type="project" value="UniProtKB-UniRule"/>
</dbReference>
<dbReference type="GO" id="GO:0009435">
    <property type="term" value="P:NAD biosynthetic process"/>
    <property type="evidence" value="ECO:0007669"/>
    <property type="project" value="UniProtKB-UniRule"/>
</dbReference>
<dbReference type="CDD" id="cd02165">
    <property type="entry name" value="NMNAT"/>
    <property type="match status" value="1"/>
</dbReference>
<dbReference type="Gene3D" id="3.40.50.620">
    <property type="entry name" value="HUPs"/>
    <property type="match status" value="1"/>
</dbReference>
<dbReference type="HAMAP" id="MF_00244">
    <property type="entry name" value="NaMN_adenylyltr"/>
    <property type="match status" value="1"/>
</dbReference>
<dbReference type="InterPro" id="IPR004821">
    <property type="entry name" value="Cyt_trans-like"/>
</dbReference>
<dbReference type="InterPro" id="IPR005248">
    <property type="entry name" value="NadD/NMNAT"/>
</dbReference>
<dbReference type="InterPro" id="IPR014729">
    <property type="entry name" value="Rossmann-like_a/b/a_fold"/>
</dbReference>
<dbReference type="NCBIfam" id="TIGR00125">
    <property type="entry name" value="cyt_tran_rel"/>
    <property type="match status" value="1"/>
</dbReference>
<dbReference type="NCBIfam" id="TIGR00482">
    <property type="entry name" value="nicotinate (nicotinamide) nucleotide adenylyltransferase"/>
    <property type="match status" value="1"/>
</dbReference>
<dbReference type="PANTHER" id="PTHR39321">
    <property type="entry name" value="NICOTINATE-NUCLEOTIDE ADENYLYLTRANSFERASE-RELATED"/>
    <property type="match status" value="1"/>
</dbReference>
<dbReference type="PANTHER" id="PTHR39321:SF3">
    <property type="entry name" value="PHOSPHOPANTETHEINE ADENYLYLTRANSFERASE"/>
    <property type="match status" value="1"/>
</dbReference>
<dbReference type="Pfam" id="PF01467">
    <property type="entry name" value="CTP_transf_like"/>
    <property type="match status" value="1"/>
</dbReference>
<dbReference type="SUPFAM" id="SSF52374">
    <property type="entry name" value="Nucleotidylyl transferase"/>
    <property type="match status" value="1"/>
</dbReference>
<organism>
    <name type="scientific">Helicobacter pylori (strain HPAG1)</name>
    <dbReference type="NCBI Taxonomy" id="357544"/>
    <lineage>
        <taxon>Bacteria</taxon>
        <taxon>Pseudomonadati</taxon>
        <taxon>Campylobacterota</taxon>
        <taxon>Epsilonproteobacteria</taxon>
        <taxon>Campylobacterales</taxon>
        <taxon>Helicobacteraceae</taxon>
        <taxon>Helicobacter</taxon>
    </lineage>
</organism>
<keyword id="KW-0067">ATP-binding</keyword>
<keyword id="KW-0520">NAD</keyword>
<keyword id="KW-0547">Nucleotide-binding</keyword>
<keyword id="KW-0548">Nucleotidyltransferase</keyword>
<keyword id="KW-0662">Pyridine nucleotide biosynthesis</keyword>
<keyword id="KW-0808">Transferase</keyword>
<gene>
    <name evidence="1" type="primary">nadD</name>
    <name type="ordered locus">HPAG1_1284</name>
</gene>
<sequence>MNTMNSVLQCKELALYGGSFDPLHKAHLAIIDQTLELLPFVKLIVLPAYQNPFKKPCFLDVQTRFKELERALRGIDRVLLSDFEIKQERAVPTIESVIYFQKLYCPKTLYLVIGADCLRHLSSWTNAKELLKRVELVVFERIGYEEIQFKGRYFPLKGIDAPISSSAIRASLGV</sequence>
<accession>Q1CRS1</accession>
<name>NADD_HELPH</name>
<proteinExistence type="inferred from homology"/>
<reference key="1">
    <citation type="journal article" date="2006" name="Proc. Natl. Acad. Sci. U.S.A.">
        <title>The complete genome sequence of a chronic atrophic gastritis Helicobacter pylori strain: evolution during disease progression.</title>
        <authorList>
            <person name="Oh J.D."/>
            <person name="Kling-Baeckhed H."/>
            <person name="Giannakis M."/>
            <person name="Xu J."/>
            <person name="Fulton R.S."/>
            <person name="Fulton L.A."/>
            <person name="Cordum H.S."/>
            <person name="Wang C."/>
            <person name="Elliott G."/>
            <person name="Edwards J."/>
            <person name="Mardis E.R."/>
            <person name="Engstrand L.G."/>
            <person name="Gordon J.I."/>
        </authorList>
    </citation>
    <scope>NUCLEOTIDE SEQUENCE [LARGE SCALE GENOMIC DNA]</scope>
    <source>
        <strain>HPAG1</strain>
    </source>
</reference>
<protein>
    <recommendedName>
        <fullName evidence="1">Probable nicotinate-nucleotide adenylyltransferase</fullName>
        <ecNumber evidence="1">2.7.7.18</ecNumber>
    </recommendedName>
    <alternativeName>
        <fullName evidence="1">Deamido-NAD(+) diphosphorylase</fullName>
    </alternativeName>
    <alternativeName>
        <fullName evidence="1">Deamido-NAD(+) pyrophosphorylase</fullName>
    </alternativeName>
    <alternativeName>
        <fullName evidence="1">Nicotinate mononucleotide adenylyltransferase</fullName>
        <shortName evidence="1">NaMN adenylyltransferase</shortName>
    </alternativeName>
</protein>
<evidence type="ECO:0000255" key="1">
    <source>
        <dbReference type="HAMAP-Rule" id="MF_00244"/>
    </source>
</evidence>
<feature type="chain" id="PRO_0000310119" description="Probable nicotinate-nucleotide adenylyltransferase">
    <location>
        <begin position="1"/>
        <end position="174"/>
    </location>
</feature>
<comment type="function">
    <text evidence="1">Catalyzes the reversible adenylation of nicotinate mononucleotide (NaMN) to nicotinic acid adenine dinucleotide (NaAD).</text>
</comment>
<comment type="catalytic activity">
    <reaction evidence="1">
        <text>nicotinate beta-D-ribonucleotide + ATP + H(+) = deamido-NAD(+) + diphosphate</text>
        <dbReference type="Rhea" id="RHEA:22860"/>
        <dbReference type="ChEBI" id="CHEBI:15378"/>
        <dbReference type="ChEBI" id="CHEBI:30616"/>
        <dbReference type="ChEBI" id="CHEBI:33019"/>
        <dbReference type="ChEBI" id="CHEBI:57502"/>
        <dbReference type="ChEBI" id="CHEBI:58437"/>
        <dbReference type="EC" id="2.7.7.18"/>
    </reaction>
</comment>
<comment type="pathway">
    <text evidence="1">Cofactor biosynthesis; NAD(+) biosynthesis; deamido-NAD(+) from nicotinate D-ribonucleotide: step 1/1.</text>
</comment>
<comment type="similarity">
    <text evidence="1">Belongs to the NadD family.</text>
</comment>